<comment type="function">
    <text evidence="1">Part of the ABC transporter complex PstSACB involved in phosphate import. Responsible for energy coupling to the transport system.</text>
</comment>
<comment type="catalytic activity">
    <reaction evidence="1">
        <text>phosphate(out) + ATP + H2O = ADP + 2 phosphate(in) + H(+)</text>
        <dbReference type="Rhea" id="RHEA:24440"/>
        <dbReference type="ChEBI" id="CHEBI:15377"/>
        <dbReference type="ChEBI" id="CHEBI:15378"/>
        <dbReference type="ChEBI" id="CHEBI:30616"/>
        <dbReference type="ChEBI" id="CHEBI:43474"/>
        <dbReference type="ChEBI" id="CHEBI:456216"/>
        <dbReference type="EC" id="7.3.2.1"/>
    </reaction>
</comment>
<comment type="subunit">
    <text evidence="1">The complex is composed of two ATP-binding proteins (PstB), two transmembrane proteins (PstC and PstA) and a solute-binding protein (PstS).</text>
</comment>
<comment type="subcellular location">
    <subcellularLocation>
        <location evidence="1">Cell inner membrane</location>
        <topology evidence="1">Peripheral membrane protein</topology>
    </subcellularLocation>
</comment>
<comment type="similarity">
    <text evidence="1">Belongs to the ABC transporter superfamily. Phosphate importer (TC 3.A.1.7) family.</text>
</comment>
<protein>
    <recommendedName>
        <fullName evidence="1">Phosphate import ATP-binding protein PstB</fullName>
        <ecNumber evidence="1">7.3.2.1</ecNumber>
    </recommendedName>
    <alternativeName>
        <fullName evidence="1">ABC phosphate transporter</fullName>
    </alternativeName>
    <alternativeName>
        <fullName evidence="1">Phosphate-transporting ATPase</fullName>
    </alternativeName>
</protein>
<evidence type="ECO:0000255" key="1">
    <source>
        <dbReference type="HAMAP-Rule" id="MF_01702"/>
    </source>
</evidence>
<evidence type="ECO:0000256" key="2">
    <source>
        <dbReference type="SAM" id="MobiDB-lite"/>
    </source>
</evidence>
<gene>
    <name evidence="1" type="primary">pstB</name>
    <name type="ordered locus">AZOSEA27360</name>
    <name type="ORF">ebA4830</name>
</gene>
<sequence>MRSIDRPGGQAARPTIGSVAGASNTRTRDARSLPDTPPLKAAAENFSFYYGQFQALKSITLPVYEKHVTALIGPSGCGKSTLLRACNRMHDLSPGNRYEGAIRLLPDNTNLLDPAVDPIEVRMRIGMVFQKPNPFPKSIYENVAYGLRIRGEKSRSVLDDRVEEALKGAALWAEVAHRLNEPAFALSGGQQQRLCIARCLATDPEVLLFDEPTSALDPIATASIEELIDQLRQKVTILIVTHNMQQAARVSDFTAYMYLGELIEFGQTRQLFVNPVRRETEDYITGRFG</sequence>
<organism>
    <name type="scientific">Aromatoleum aromaticum (strain DSM 19018 / LMG 30748 / EbN1)</name>
    <name type="common">Azoarcus sp. (strain EbN1)</name>
    <dbReference type="NCBI Taxonomy" id="76114"/>
    <lineage>
        <taxon>Bacteria</taxon>
        <taxon>Pseudomonadati</taxon>
        <taxon>Pseudomonadota</taxon>
        <taxon>Betaproteobacteria</taxon>
        <taxon>Rhodocyclales</taxon>
        <taxon>Rhodocyclaceae</taxon>
        <taxon>Aromatoleum</taxon>
    </lineage>
</organism>
<name>PSTB_AROAE</name>
<proteinExistence type="inferred from homology"/>
<keyword id="KW-0067">ATP-binding</keyword>
<keyword id="KW-0997">Cell inner membrane</keyword>
<keyword id="KW-1003">Cell membrane</keyword>
<keyword id="KW-0472">Membrane</keyword>
<keyword id="KW-0547">Nucleotide-binding</keyword>
<keyword id="KW-0592">Phosphate transport</keyword>
<keyword id="KW-1185">Reference proteome</keyword>
<keyword id="KW-1278">Translocase</keyword>
<keyword id="KW-0813">Transport</keyword>
<feature type="chain" id="PRO_0000272422" description="Phosphate import ATP-binding protein PstB">
    <location>
        <begin position="1"/>
        <end position="289"/>
    </location>
</feature>
<feature type="domain" description="ABC transporter" evidence="1">
    <location>
        <begin position="41"/>
        <end position="284"/>
    </location>
</feature>
<feature type="region of interest" description="Disordered" evidence="2">
    <location>
        <begin position="1"/>
        <end position="37"/>
    </location>
</feature>
<feature type="binding site" evidence="1">
    <location>
        <begin position="73"/>
        <end position="80"/>
    </location>
    <ligand>
        <name>ATP</name>
        <dbReference type="ChEBI" id="CHEBI:30616"/>
    </ligand>
</feature>
<reference key="1">
    <citation type="journal article" date="2005" name="Arch. Microbiol.">
        <title>The genome sequence of an anaerobic aromatic-degrading denitrifying bacterium, strain EbN1.</title>
        <authorList>
            <person name="Rabus R."/>
            <person name="Kube M."/>
            <person name="Heider J."/>
            <person name="Beck A."/>
            <person name="Heitmann K."/>
            <person name="Widdel F."/>
            <person name="Reinhardt R."/>
        </authorList>
    </citation>
    <scope>NUCLEOTIDE SEQUENCE [LARGE SCALE GENOMIC DNA]</scope>
    <source>
        <strain>DSM 19018 / LMG 30748 / EbN1</strain>
    </source>
</reference>
<dbReference type="EC" id="7.3.2.1" evidence="1"/>
<dbReference type="EMBL" id="CR555306">
    <property type="protein sequence ID" value="CAI08861.1"/>
    <property type="molecule type" value="Genomic_DNA"/>
</dbReference>
<dbReference type="RefSeq" id="WP_011238544.1">
    <property type="nucleotide sequence ID" value="NC_006513.1"/>
</dbReference>
<dbReference type="SMR" id="Q5P1F3"/>
<dbReference type="STRING" id="76114.ebA4830"/>
<dbReference type="KEGG" id="eba:ebA4830"/>
<dbReference type="eggNOG" id="COG1117">
    <property type="taxonomic scope" value="Bacteria"/>
</dbReference>
<dbReference type="HOGENOM" id="CLU_000604_1_22_4"/>
<dbReference type="OrthoDB" id="9802264at2"/>
<dbReference type="Proteomes" id="UP000006552">
    <property type="component" value="Chromosome"/>
</dbReference>
<dbReference type="GO" id="GO:0005886">
    <property type="term" value="C:plasma membrane"/>
    <property type="evidence" value="ECO:0007669"/>
    <property type="project" value="UniProtKB-SubCell"/>
</dbReference>
<dbReference type="GO" id="GO:0005524">
    <property type="term" value="F:ATP binding"/>
    <property type="evidence" value="ECO:0007669"/>
    <property type="project" value="UniProtKB-KW"/>
</dbReference>
<dbReference type="GO" id="GO:0016887">
    <property type="term" value="F:ATP hydrolysis activity"/>
    <property type="evidence" value="ECO:0007669"/>
    <property type="project" value="InterPro"/>
</dbReference>
<dbReference type="GO" id="GO:0015415">
    <property type="term" value="F:ATPase-coupled phosphate ion transmembrane transporter activity"/>
    <property type="evidence" value="ECO:0007669"/>
    <property type="project" value="UniProtKB-EC"/>
</dbReference>
<dbReference type="GO" id="GO:0035435">
    <property type="term" value="P:phosphate ion transmembrane transport"/>
    <property type="evidence" value="ECO:0007669"/>
    <property type="project" value="InterPro"/>
</dbReference>
<dbReference type="CDD" id="cd03260">
    <property type="entry name" value="ABC_PstB_phosphate_transporter"/>
    <property type="match status" value="1"/>
</dbReference>
<dbReference type="Gene3D" id="3.40.50.300">
    <property type="entry name" value="P-loop containing nucleotide triphosphate hydrolases"/>
    <property type="match status" value="1"/>
</dbReference>
<dbReference type="InterPro" id="IPR003593">
    <property type="entry name" value="AAA+_ATPase"/>
</dbReference>
<dbReference type="InterPro" id="IPR003439">
    <property type="entry name" value="ABC_transporter-like_ATP-bd"/>
</dbReference>
<dbReference type="InterPro" id="IPR017871">
    <property type="entry name" value="ABC_transporter-like_CS"/>
</dbReference>
<dbReference type="InterPro" id="IPR027417">
    <property type="entry name" value="P-loop_NTPase"/>
</dbReference>
<dbReference type="InterPro" id="IPR005670">
    <property type="entry name" value="PstB-like"/>
</dbReference>
<dbReference type="NCBIfam" id="TIGR00972">
    <property type="entry name" value="3a0107s01c2"/>
    <property type="match status" value="1"/>
</dbReference>
<dbReference type="PANTHER" id="PTHR43423">
    <property type="entry name" value="ABC TRANSPORTER I FAMILY MEMBER 17"/>
    <property type="match status" value="1"/>
</dbReference>
<dbReference type="PANTHER" id="PTHR43423:SF1">
    <property type="entry name" value="ABC TRANSPORTER I FAMILY MEMBER 17"/>
    <property type="match status" value="1"/>
</dbReference>
<dbReference type="Pfam" id="PF00005">
    <property type="entry name" value="ABC_tran"/>
    <property type="match status" value="1"/>
</dbReference>
<dbReference type="SMART" id="SM00382">
    <property type="entry name" value="AAA"/>
    <property type="match status" value="1"/>
</dbReference>
<dbReference type="SUPFAM" id="SSF52540">
    <property type="entry name" value="P-loop containing nucleoside triphosphate hydrolases"/>
    <property type="match status" value="1"/>
</dbReference>
<dbReference type="PROSITE" id="PS00211">
    <property type="entry name" value="ABC_TRANSPORTER_1"/>
    <property type="match status" value="1"/>
</dbReference>
<dbReference type="PROSITE" id="PS50893">
    <property type="entry name" value="ABC_TRANSPORTER_2"/>
    <property type="match status" value="1"/>
</dbReference>
<dbReference type="PROSITE" id="PS51238">
    <property type="entry name" value="PSTB"/>
    <property type="match status" value="1"/>
</dbReference>
<accession>Q5P1F3</accession>